<name>SPT5H_DANRE</name>
<feature type="chain" id="PRO_0000208472" description="Transcription elongation factor SPT5">
    <location>
        <begin position="1"/>
        <end position="1084"/>
    </location>
</feature>
<feature type="domain" description="KOW 1">
    <location>
        <begin position="272"/>
        <end position="305"/>
    </location>
</feature>
<feature type="domain" description="KOW 2">
    <location>
        <begin position="419"/>
        <end position="450"/>
    </location>
</feature>
<feature type="domain" description="KOW 3">
    <location>
        <begin position="471"/>
        <end position="502"/>
    </location>
</feature>
<feature type="domain" description="KOW 4">
    <location>
        <begin position="593"/>
        <end position="626"/>
    </location>
</feature>
<feature type="domain" description="KOW 5">
    <location>
        <begin position="702"/>
        <end position="735"/>
    </location>
</feature>
<feature type="repeat" description="CTR1-1; approximate">
    <location>
        <begin position="758"/>
        <end position="763"/>
    </location>
</feature>
<feature type="repeat" description="CTR1-2; approximate">
    <location>
        <begin position="764"/>
        <end position="769"/>
    </location>
</feature>
<feature type="repeat" description="CTR1-3">
    <location>
        <begin position="770"/>
        <end position="776"/>
    </location>
</feature>
<feature type="repeat" description="CTR1-4">
    <location>
        <begin position="779"/>
        <end position="785"/>
    </location>
</feature>
<feature type="repeat" description="CTR1-5">
    <location>
        <begin position="786"/>
        <end position="792"/>
    </location>
</feature>
<feature type="repeat" description="CTR1-6">
    <location>
        <begin position="794"/>
        <end position="800"/>
    </location>
</feature>
<feature type="repeat" description="CTR1-7">
    <location>
        <begin position="801"/>
        <end position="807"/>
    </location>
</feature>
<feature type="repeat" description="CTR1-8">
    <location>
        <begin position="809"/>
        <end position="815"/>
    </location>
</feature>
<feature type="repeat" description="CTR2-1">
    <location>
        <begin position="842"/>
        <end position="849"/>
    </location>
</feature>
<feature type="repeat" description="CTR2-2; approximate">
    <location>
        <begin position="852"/>
        <end position="860"/>
    </location>
</feature>
<feature type="repeat" description="CTR2-3; approximate">
    <location>
        <begin position="861"/>
        <end position="867"/>
    </location>
</feature>
<feature type="repeat" description="CTR2-4; half-length">
    <location>
        <begin position="879"/>
        <end position="883"/>
    </location>
</feature>
<feature type="repeat" description="CTR2-5; approximate">
    <location>
        <begin position="894"/>
        <end position="900"/>
    </location>
</feature>
<feature type="repeat" description="CTR2-6">
    <location>
        <begin position="902"/>
        <end position="909"/>
    </location>
</feature>
<feature type="repeat" description="CTR2-7; approximate">
    <location>
        <begin position="914"/>
        <end position="919"/>
    </location>
</feature>
<feature type="repeat" description="CTR2-8">
    <location>
        <begin position="922"/>
        <end position="928"/>
    </location>
</feature>
<feature type="repeat" description="CTR2-9">
    <location>
        <begin position="930"/>
        <end position="937"/>
    </location>
</feature>
<feature type="repeat" description="CTR2-10">
    <location>
        <begin position="941"/>
        <end position="948"/>
    </location>
</feature>
<feature type="region of interest" description="Disordered" evidence="3">
    <location>
        <begin position="1"/>
        <end position="91"/>
    </location>
</feature>
<feature type="region of interest" description="Interaction with SUPT4H1" evidence="1">
    <location>
        <begin position="175"/>
        <end position="269"/>
    </location>
</feature>
<feature type="region of interest" description="Interaction with RNA polymerase II" evidence="1">
    <location>
        <begin position="312"/>
        <end position="419"/>
    </location>
</feature>
<feature type="region of interest" description="Disordered" evidence="3">
    <location>
        <begin position="667"/>
        <end position="700"/>
    </location>
</feature>
<feature type="region of interest" description="Disordered" evidence="3">
    <location>
        <begin position="748"/>
        <end position="973"/>
    </location>
</feature>
<feature type="region of interest" description="8 X 7 AA approximate tandem repeats of G-S-[QR]-T-P-X-[YQ], motif CTR1">
    <location>
        <begin position="758"/>
        <end position="815"/>
    </location>
</feature>
<feature type="region of interest" description="10 X 8 AA approximate tandem repeats of P-[TS]-P-S-P-[QA]-[SG]-Y, motif CTR2">
    <location>
        <begin position="842"/>
        <end position="948"/>
    </location>
</feature>
<feature type="compositionally biased region" description="Acidic residues" evidence="3">
    <location>
        <begin position="20"/>
        <end position="32"/>
    </location>
</feature>
<feature type="compositionally biased region" description="Acidic residues" evidence="3">
    <location>
        <begin position="41"/>
        <end position="62"/>
    </location>
</feature>
<feature type="compositionally biased region" description="Acidic residues" evidence="3">
    <location>
        <begin position="77"/>
        <end position="91"/>
    </location>
</feature>
<feature type="compositionally biased region" description="Gly residues" evidence="3">
    <location>
        <begin position="674"/>
        <end position="694"/>
    </location>
</feature>
<feature type="compositionally biased region" description="Polar residues" evidence="3">
    <location>
        <begin position="759"/>
        <end position="790"/>
    </location>
</feature>
<feature type="compositionally biased region" description="Acidic residues" evidence="3">
    <location>
        <begin position="832"/>
        <end position="842"/>
    </location>
</feature>
<feature type="compositionally biased region" description="Pro residues" evidence="3">
    <location>
        <begin position="855"/>
        <end position="864"/>
    </location>
</feature>
<feature type="compositionally biased region" description="Polar residues" evidence="3">
    <location>
        <begin position="866"/>
        <end position="888"/>
    </location>
</feature>
<feature type="compositionally biased region" description="Low complexity" evidence="3">
    <location>
        <begin position="894"/>
        <end position="909"/>
    </location>
</feature>
<feature type="modified residue" description="Phosphoserine" evidence="6">
    <location>
        <position position="665"/>
    </location>
</feature>
<feature type="modified residue" description="Phosphothreonine; by CDK9" evidence="1">
    <location>
        <position position="773"/>
    </location>
</feature>
<feature type="modified residue" description="Phosphothreonine; by CDK9" evidence="1">
    <location>
        <position position="782"/>
    </location>
</feature>
<feature type="splice variant" id="VSP_016284" description="In isoform 2." evidence="7">
    <location>
        <begin position="603"/>
        <end position="830"/>
    </location>
</feature>
<feature type="mutagenesis site" description="In fog(m806); reduced development of dopamine containing neurons in the hypothalamus. Specifically abrogates inhibition of transcriptional elongation. No effect on the stimulation of transcriptional elongation at low nucleotide concentrations." evidence="4">
    <original>V</original>
    <variation>D</variation>
    <location>
        <position position="1012"/>
    </location>
</feature>
<protein>
    <recommendedName>
        <fullName>Transcription elongation factor SPT5</fullName>
    </recommendedName>
    <alternativeName>
        <fullName>DRB sensitivity-inducing factor large subunit</fullName>
        <shortName>DSIF large subunit</shortName>
    </alternativeName>
    <alternativeName>
        <fullName>Protein foggy</fullName>
    </alternativeName>
</protein>
<organism>
    <name type="scientific">Danio rerio</name>
    <name type="common">Zebrafish</name>
    <name type="synonym">Brachydanio rerio</name>
    <dbReference type="NCBI Taxonomy" id="7955"/>
    <lineage>
        <taxon>Eukaryota</taxon>
        <taxon>Metazoa</taxon>
        <taxon>Chordata</taxon>
        <taxon>Craniata</taxon>
        <taxon>Vertebrata</taxon>
        <taxon>Euteleostomi</taxon>
        <taxon>Actinopterygii</taxon>
        <taxon>Neopterygii</taxon>
        <taxon>Teleostei</taxon>
        <taxon>Ostariophysi</taxon>
        <taxon>Cypriniformes</taxon>
        <taxon>Danionidae</taxon>
        <taxon>Danioninae</taxon>
        <taxon>Danio</taxon>
    </lineage>
</organism>
<reference key="1">
    <citation type="journal article" date="2000" name="Nature">
        <title>A regulator of transcriptional elongation controls vertebrate neuronal development.</title>
        <authorList>
            <person name="Guo S."/>
            <person name="Yamaguchi Y."/>
            <person name="Schilbach S."/>
            <person name="Wada T."/>
            <person name="Lee J."/>
            <person name="Goddard A."/>
            <person name="French D."/>
            <person name="Handa H."/>
            <person name="Rosenthal A."/>
        </authorList>
    </citation>
    <scope>NUCLEOTIDE SEQUENCE [MRNA] (ISOFORM 1)</scope>
    <scope>FUNCTION</scope>
    <scope>SUBCELLULAR LOCATION</scope>
    <scope>DEVELOPMENTAL STAGE</scope>
    <scope>MUTAGENESIS OF VAL-1012</scope>
</reference>
<reference key="2">
    <citation type="submission" date="2003-09" db="EMBL/GenBank/DDBJ databases">
        <authorList>
            <consortium name="NIH - Zebrafish Gene Collection (ZGC) project"/>
        </authorList>
    </citation>
    <scope>NUCLEOTIDE SEQUENCE [LARGE SCALE MRNA] (ISOFORM 2)</scope>
</reference>
<reference key="3">
    <citation type="journal article" date="2002" name="Development">
        <title>The elongation factors Pandora/Spt6 and Foggy/Spt5 promote transcription in the zebrafish embryo.</title>
        <authorList>
            <person name="Keegan B.R."/>
            <person name="Feldman J.L."/>
            <person name="Lee D.H."/>
            <person name="Koos D.S."/>
            <person name="Ho R.K."/>
            <person name="Stainier D.Y.R."/>
            <person name="Yelon D."/>
        </authorList>
    </citation>
    <scope>FUNCTION</scope>
    <scope>DEVELOPMENTAL STAGE</scope>
</reference>
<reference key="4">
    <citation type="journal article" date="2008" name="J. Proteome Res.">
        <title>Online automated in vivo zebrafish phosphoproteomics: from large-scale analysis down to a single embryo.</title>
        <authorList>
            <person name="Lemeer S."/>
            <person name="Pinkse M.W.H."/>
            <person name="Mohammed S."/>
            <person name="van Breukelen B."/>
            <person name="den Hertog J."/>
            <person name="Slijper M."/>
            <person name="Heck A.J.R."/>
        </authorList>
    </citation>
    <scope>PHOSPHORYLATION [LARGE SCALE ANALYSIS] AT SER-665</scope>
    <scope>IDENTIFICATION BY MASS SPECTROMETRY</scope>
    <source>
        <tissue>Embryo</tissue>
    </source>
</reference>
<sequence>MSDSEDSDFSDNQSERSSEAEEVEENEEEEEQGSVAGSDKAEEEGEDLEDEEEYDEEEEEDDDRPRKKARHGGFILDEADVDDEYEDEDPWEDGAEDILEKEEAEVSNLDHVVLDEDHSGSRRLQNLWRDSREEALGEYYMRKYAKSSGGEHFYGGSEDLSDDITQQQLLPGVKDPNLWTVKCKIGEERATAISLMRKFVAYQCTDTPLQIKSVVAPEHVKGYIYVEAYKQTHVKAAIEGVGNLRMGFWNQQMVPIKEMTDVLKVVKEVTNLKPKSWVRLKRGLYKDDIAQVDYVEPSQNTISLKMIPRIDLDRIKARMSMKDWFAKRKKFKRPPQRLFDAEKIRSLGGEVSHDGDFMIFEANRYSRKGFLFKSFAMSAVITEGVKPTLSELEKFEDQPEGIDLEVVTETTGKEREHNLQAGDNVEVCEGELINLQGKILSVDGNKITIMPKHEDLKDPLEFPAHELRKYFRMGDHVKVIAGRYEGDTGLIVRVEENFVILFSDLTMHELKVLPRDLQLCSETASGVDAGGQHEWGELVQLDPQTVGVIVRLERETFQVLNMHGKVLTVRHQAVNRRKDNRFAVALDSEQNNIHVKDIVKVIDGPHSGREGEIRHIFRGFAFLHCKKLVENGGMFVCKARHLVLAGGSKPRDVTNFTVGGFAPMSPRISSPMHPGGGGQPQRGGGGGGGGGMGRGRGRRDNDLIGQTVRISQGPYKGYIGVVKDATESTARVELHSTCQTISVDRQRLTTVGGKERQGRSSTHLRTPMYGSQTPIYGTGSRTPMYGSQTPLHDGSRTPHYGSQTPLHDGSRTPGQSGAWDPNNPNTPSRPDDEYEFAYDDEPSPSPQGYGGTPNPQTPGYPEVPSPQVNPQYNPQTPGTPAMYNTDQYSPYAAPSPQGSYQPSPSPQSYHQVAPSPVGYQNTHSPASYHPTPSPMAYQASPSPSPVGYSPMTPGAPSPGGYNPHTPGSNIDQASNDWVTTDIMVRVKDTFLDGGVINQTGIIRSVTGGMCSVFLQDTEKVVSISSEHLEPVTPTKNNKVKVILGEDREATGVLLSIDGEDGIVRMELDEQLKILNLRFLGKLEV</sequence>
<comment type="function">
    <text evidence="2 4 5">Component of the DRB sensitivity-inducing factor complex (DSIF complex), which regulates mRNA processing and transcription elongation by RNA polymerase II (PubMed:11923199). DSIF positively regulates mRNA capping by stimulating the mRNA guanylyltransferase activity of RNGTT/CAP1A (By similarity). DSIF also acts cooperatively with the negative elongation factor complex (NELF complex) to enhance transcriptional pausing at sites proximal to the promoter (By similarity). Transcriptional pausing may facilitate the assembly of an elongation competent RNA polymerase II complex (By similarity). DSIF and NELF promote pausing by inhibition of the transcription elongation factor TFIIS/S-II (By similarity). TFIIS/S-II binds to RNA polymerase II at transcription pause sites and stimulates the weak intrinsic nuclease activity of the enzyme (By similarity). Cleavage of blocked transcripts by RNA polymerase II promotes the resumption of transcription from the new 3' terminus and may allow repeated attempts at transcription through natural pause sites (By similarity). Following phosphorylation by CDK9, DSIF can also positively regulate transcriptional elongation (By similarity). Regulation of transcriptional elongation by this protein is required for the expression of genes which control neuronal development (PubMed:11099044).</text>
</comment>
<comment type="subunit">
    <text evidence="1">Interacts with SUPT4H1 to form the DSIF complex. DSIF interacts with RNA polymerase II and with the positive transcription elongation factor b complex (P-TEFb complex), which is composed of CDK9 and cyclin-T (By similarity).</text>
</comment>
<comment type="subcellular location">
    <subcellularLocation>
        <location evidence="4">Nucleus</location>
    </subcellularLocation>
</comment>
<comment type="alternative products">
    <event type="alternative splicing"/>
    <isoform>
        <id>Q9DDT5-1</id>
        <name>1</name>
        <sequence type="displayed"/>
    </isoform>
    <isoform>
        <id>Q9DDT5-2</id>
        <name>2</name>
        <sequence type="described" ref="VSP_016284"/>
    </isoform>
</comment>
<comment type="developmental stage">
    <text evidence="4 5">Maternally expressed throughout the early blastoderm. Expressed in the neural plate of the tailbud stage embryo, at 10 hours post-fertilization (hpf). Highly expressed in the developing brain at 28 hpf, and at lower levels in the rest of the embryo.</text>
</comment>
<comment type="PTM">
    <text evidence="1">Phosphorylated. Phosphorylation by P-TEFb (CDK9) at Thr residues of the C-terminal repeats alleviates transcriptional pausing and promotes transcription elongation (By similarity).</text>
</comment>
<comment type="similarity">
    <text evidence="8">Belongs to the SPT5 family.</text>
</comment>
<evidence type="ECO:0000250" key="1"/>
<evidence type="ECO:0000250" key="2">
    <source>
        <dbReference type="UniProtKB" id="O00267"/>
    </source>
</evidence>
<evidence type="ECO:0000256" key="3">
    <source>
        <dbReference type="SAM" id="MobiDB-lite"/>
    </source>
</evidence>
<evidence type="ECO:0000269" key="4">
    <source>
    </source>
</evidence>
<evidence type="ECO:0000269" key="5">
    <source>
    </source>
</evidence>
<evidence type="ECO:0000269" key="6">
    <source>
    </source>
</evidence>
<evidence type="ECO:0000303" key="7">
    <source ref="2"/>
</evidence>
<evidence type="ECO:0000305" key="8"/>
<dbReference type="EMBL" id="AF288409">
    <property type="protein sequence ID" value="AAG37030.1"/>
    <property type="molecule type" value="mRNA"/>
</dbReference>
<dbReference type="EMBL" id="BC057529">
    <property type="protein sequence ID" value="AAH57529.1"/>
    <property type="molecule type" value="mRNA"/>
</dbReference>
<dbReference type="SMR" id="Q9DDT5"/>
<dbReference type="FunCoup" id="Q9DDT5">
    <property type="interactions" value="3337"/>
</dbReference>
<dbReference type="STRING" id="7955.ENSDARP00000062675"/>
<dbReference type="iPTMnet" id="Q9DDT5"/>
<dbReference type="PaxDb" id="7955-ENSDARP00000062675"/>
<dbReference type="AGR" id="ZFIN:ZDB-GENE-001207-1"/>
<dbReference type="ZFIN" id="ZDB-GENE-001207-1">
    <property type="gene designation" value="supt5h"/>
</dbReference>
<dbReference type="eggNOG" id="KOG1999">
    <property type="taxonomic scope" value="Eukaryota"/>
</dbReference>
<dbReference type="InParanoid" id="Q9DDT5"/>
<dbReference type="PhylomeDB" id="Q9DDT5"/>
<dbReference type="Reactome" id="R-DRE-674695">
    <property type="pathway name" value="RNA Polymerase II Pre-transcription Events"/>
</dbReference>
<dbReference type="Reactome" id="R-DRE-6796648">
    <property type="pathway name" value="TP53 Regulates Transcription of DNA Repair Genes"/>
</dbReference>
<dbReference type="Reactome" id="R-DRE-72086">
    <property type="pathway name" value="mRNA Capping"/>
</dbReference>
<dbReference type="Reactome" id="R-DRE-77075">
    <property type="pathway name" value="RNA Pol II CTD phosphorylation and interaction with CE"/>
</dbReference>
<dbReference type="PRO" id="PR:Q9DDT5"/>
<dbReference type="Proteomes" id="UP000000437">
    <property type="component" value="Unplaced"/>
</dbReference>
<dbReference type="GO" id="GO:0032044">
    <property type="term" value="C:DSIF complex"/>
    <property type="evidence" value="ECO:0000250"/>
    <property type="project" value="UniProtKB"/>
</dbReference>
<dbReference type="GO" id="GO:0005634">
    <property type="term" value="C:nucleus"/>
    <property type="evidence" value="ECO:0000314"/>
    <property type="project" value="ZFIN"/>
</dbReference>
<dbReference type="GO" id="GO:0003677">
    <property type="term" value="F:DNA binding"/>
    <property type="evidence" value="ECO:0000314"/>
    <property type="project" value="ZFIN"/>
</dbReference>
<dbReference type="GO" id="GO:0003729">
    <property type="term" value="F:mRNA binding"/>
    <property type="evidence" value="ECO:0000318"/>
    <property type="project" value="GO_Central"/>
</dbReference>
<dbReference type="GO" id="GO:0021954">
    <property type="term" value="P:central nervous system neuron development"/>
    <property type="evidence" value="ECO:0000315"/>
    <property type="project" value="ZFIN"/>
</dbReference>
<dbReference type="GO" id="GO:0030097">
    <property type="term" value="P:hemopoiesis"/>
    <property type="evidence" value="ECO:0000315"/>
    <property type="project" value="ZFIN"/>
</dbReference>
<dbReference type="GO" id="GO:0040037">
    <property type="term" value="P:negative regulation of fibroblast growth factor receptor signaling pathway"/>
    <property type="evidence" value="ECO:0000315"/>
    <property type="project" value="ZFIN"/>
</dbReference>
<dbReference type="GO" id="GO:0034244">
    <property type="term" value="P:negative regulation of transcription elongation by RNA polymerase II"/>
    <property type="evidence" value="ECO:0000315"/>
    <property type="project" value="ZFIN"/>
</dbReference>
<dbReference type="GO" id="GO:0001764">
    <property type="term" value="P:neuron migration"/>
    <property type="evidence" value="ECO:0000315"/>
    <property type="project" value="ZFIN"/>
</dbReference>
<dbReference type="GO" id="GO:1901534">
    <property type="term" value="P:positive regulation of hematopoietic progenitor cell differentiation"/>
    <property type="evidence" value="ECO:0000315"/>
    <property type="project" value="ZFIN"/>
</dbReference>
<dbReference type="GO" id="GO:1902038">
    <property type="term" value="P:positive regulation of hematopoietic stem cell differentiation"/>
    <property type="evidence" value="ECO:0000315"/>
    <property type="project" value="ZFIN"/>
</dbReference>
<dbReference type="GO" id="GO:0046427">
    <property type="term" value="P:positive regulation of receptor signaling pathway via JAK-STAT"/>
    <property type="evidence" value="ECO:0000315"/>
    <property type="project" value="ZFIN"/>
</dbReference>
<dbReference type="GO" id="GO:0032968">
    <property type="term" value="P:positive regulation of transcription elongation by RNA polymerase II"/>
    <property type="evidence" value="ECO:0000315"/>
    <property type="project" value="ZFIN"/>
</dbReference>
<dbReference type="GO" id="GO:0060335">
    <property type="term" value="P:positive regulation of type II interferon-mediated signaling pathway"/>
    <property type="evidence" value="ECO:0000315"/>
    <property type="project" value="ZFIN"/>
</dbReference>
<dbReference type="GO" id="GO:0006357">
    <property type="term" value="P:regulation of transcription by RNA polymerase II"/>
    <property type="evidence" value="ECO:0000315"/>
    <property type="project" value="ZFIN"/>
</dbReference>
<dbReference type="GO" id="GO:0006368">
    <property type="term" value="P:transcription elongation by RNA polymerase II"/>
    <property type="evidence" value="ECO:0000315"/>
    <property type="project" value="ZFIN"/>
</dbReference>
<dbReference type="GO" id="GO:0140673">
    <property type="term" value="P:transcription elongation-coupled chromatin remodeling"/>
    <property type="evidence" value="ECO:0007669"/>
    <property type="project" value="InterPro"/>
</dbReference>
<dbReference type="CDD" id="cd06081">
    <property type="entry name" value="KOW_Spt5_1"/>
    <property type="match status" value="1"/>
</dbReference>
<dbReference type="CDD" id="cd06082">
    <property type="entry name" value="KOW_Spt5_2"/>
    <property type="match status" value="1"/>
</dbReference>
<dbReference type="CDD" id="cd06083">
    <property type="entry name" value="KOW_Spt5_3"/>
    <property type="match status" value="1"/>
</dbReference>
<dbReference type="CDD" id="cd06084">
    <property type="entry name" value="KOW_Spt5_4"/>
    <property type="match status" value="1"/>
</dbReference>
<dbReference type="CDD" id="cd06085">
    <property type="entry name" value="KOW_Spt5_5"/>
    <property type="match status" value="1"/>
</dbReference>
<dbReference type="CDD" id="cd06086">
    <property type="entry name" value="KOW_Spt5_6"/>
    <property type="match status" value="1"/>
</dbReference>
<dbReference type="CDD" id="cd09888">
    <property type="entry name" value="NGN_Euk"/>
    <property type="match status" value="1"/>
</dbReference>
<dbReference type="FunFam" id="2.30.30.30:FF:000013">
    <property type="entry name" value="Transcription elongation factor SPT5"/>
    <property type="match status" value="1"/>
</dbReference>
<dbReference type="FunFam" id="2.30.30.30:FF:000016">
    <property type="entry name" value="Transcription elongation factor SPT5"/>
    <property type="match status" value="1"/>
</dbReference>
<dbReference type="FunFam" id="2.30.30.30:FF:000017">
    <property type="entry name" value="Transcription elongation factor SPT5"/>
    <property type="match status" value="1"/>
</dbReference>
<dbReference type="FunFam" id="3.30.70.940:FF:000003">
    <property type="entry name" value="Transcription elongation factor SPT5"/>
    <property type="match status" value="1"/>
</dbReference>
<dbReference type="Gene3D" id="2.30.30.30">
    <property type="match status" value="3"/>
</dbReference>
<dbReference type="Gene3D" id="3.30.70.940">
    <property type="entry name" value="NusG, N-terminal domain"/>
    <property type="match status" value="1"/>
</dbReference>
<dbReference type="InterPro" id="IPR005824">
    <property type="entry name" value="KOW"/>
</dbReference>
<dbReference type="InterPro" id="IPR041973">
    <property type="entry name" value="KOW_Spt5_1"/>
</dbReference>
<dbReference type="InterPro" id="IPR041975">
    <property type="entry name" value="KOW_Spt5_2"/>
</dbReference>
<dbReference type="InterPro" id="IPR041976">
    <property type="entry name" value="KOW_Spt5_3"/>
</dbReference>
<dbReference type="InterPro" id="IPR041977">
    <property type="entry name" value="KOW_Spt5_4"/>
</dbReference>
<dbReference type="InterPro" id="IPR041978">
    <property type="entry name" value="KOW_Spt5_5"/>
</dbReference>
<dbReference type="InterPro" id="IPR041980">
    <property type="entry name" value="KOW_Spt5_6"/>
</dbReference>
<dbReference type="InterPro" id="IPR005100">
    <property type="entry name" value="NGN-domain"/>
</dbReference>
<dbReference type="InterPro" id="IPR006645">
    <property type="entry name" value="NGN-like_dom"/>
</dbReference>
<dbReference type="InterPro" id="IPR036735">
    <property type="entry name" value="NGN_dom_sf"/>
</dbReference>
<dbReference type="InterPro" id="IPR039385">
    <property type="entry name" value="NGN_Euk"/>
</dbReference>
<dbReference type="InterPro" id="IPR014722">
    <property type="entry name" value="Rib_uL2_dom2"/>
</dbReference>
<dbReference type="InterPro" id="IPR039659">
    <property type="entry name" value="SPT5"/>
</dbReference>
<dbReference type="InterPro" id="IPR024945">
    <property type="entry name" value="Spt5_C_dom"/>
</dbReference>
<dbReference type="InterPro" id="IPR022581">
    <property type="entry name" value="Spt5_N"/>
</dbReference>
<dbReference type="InterPro" id="IPR017071">
    <property type="entry name" value="TF_Spt5_eukaryote"/>
</dbReference>
<dbReference type="InterPro" id="IPR008991">
    <property type="entry name" value="Translation_prot_SH3-like_sf"/>
</dbReference>
<dbReference type="PANTHER" id="PTHR11125">
    <property type="entry name" value="SUPPRESSOR OF TY 5"/>
    <property type="match status" value="1"/>
</dbReference>
<dbReference type="PANTHER" id="PTHR11125:SF7">
    <property type="entry name" value="TRANSCRIPTION ELONGATION FACTOR SPT5"/>
    <property type="match status" value="1"/>
</dbReference>
<dbReference type="Pfam" id="PF00467">
    <property type="entry name" value="KOW"/>
    <property type="match status" value="1"/>
</dbReference>
<dbReference type="Pfam" id="PF23042">
    <property type="entry name" value="KOW1_SPT5"/>
    <property type="match status" value="1"/>
</dbReference>
<dbReference type="Pfam" id="PF23284">
    <property type="entry name" value="KOW2_Spt5"/>
    <property type="match status" value="1"/>
</dbReference>
<dbReference type="Pfam" id="PF23291">
    <property type="entry name" value="KOW4_SPT5"/>
    <property type="match status" value="1"/>
</dbReference>
<dbReference type="Pfam" id="PF23290">
    <property type="entry name" value="KOW5_SPT5"/>
    <property type="match status" value="1"/>
</dbReference>
<dbReference type="Pfam" id="PF23288">
    <property type="entry name" value="KOW6_SPT5"/>
    <property type="match status" value="1"/>
</dbReference>
<dbReference type="Pfam" id="PF23287">
    <property type="entry name" value="KOW7_SPT5"/>
    <property type="match status" value="1"/>
</dbReference>
<dbReference type="Pfam" id="PF23037">
    <property type="entry name" value="KOWx_SPT5"/>
    <property type="match status" value="1"/>
</dbReference>
<dbReference type="Pfam" id="PF03439">
    <property type="entry name" value="Spt5-NGN"/>
    <property type="match status" value="1"/>
</dbReference>
<dbReference type="Pfam" id="PF11942">
    <property type="entry name" value="Spt5_N"/>
    <property type="match status" value="1"/>
</dbReference>
<dbReference type="PIRSF" id="PIRSF036945">
    <property type="entry name" value="Spt5"/>
    <property type="match status" value="1"/>
</dbReference>
<dbReference type="SMART" id="SM01104">
    <property type="entry name" value="CTD"/>
    <property type="match status" value="1"/>
</dbReference>
<dbReference type="SMART" id="SM00739">
    <property type="entry name" value="KOW"/>
    <property type="match status" value="6"/>
</dbReference>
<dbReference type="SMART" id="SM00738">
    <property type="entry name" value="NGN"/>
    <property type="match status" value="1"/>
</dbReference>
<dbReference type="SUPFAM" id="SSF50104">
    <property type="entry name" value="Translation proteins SH3-like domain"/>
    <property type="match status" value="1"/>
</dbReference>
<accession>Q9DDT5</accession>
<accession>Q6PFJ3</accession>
<gene>
    <name type="primary">supt5h</name>
    <name type="synonym">fog</name>
    <name type="synonym">spt5</name>
</gene>
<keyword id="KW-0010">Activator</keyword>
<keyword id="KW-0025">Alternative splicing</keyword>
<keyword id="KW-0539">Nucleus</keyword>
<keyword id="KW-0597">Phosphoprotein</keyword>
<keyword id="KW-1185">Reference proteome</keyword>
<keyword id="KW-0677">Repeat</keyword>
<keyword id="KW-0678">Repressor</keyword>
<keyword id="KW-0804">Transcription</keyword>
<keyword id="KW-0805">Transcription regulation</keyword>
<proteinExistence type="evidence at protein level"/>